<protein>
    <recommendedName>
        <fullName evidence="1">Lon protease</fullName>
        <ecNumber evidence="1">3.4.21.53</ecNumber>
    </recommendedName>
    <alternativeName>
        <fullName evidence="1">ATP-dependent protease La</fullName>
    </alternativeName>
</protein>
<keyword id="KW-0067">ATP-binding</keyword>
<keyword id="KW-0963">Cytoplasm</keyword>
<keyword id="KW-0378">Hydrolase</keyword>
<keyword id="KW-0547">Nucleotide-binding</keyword>
<keyword id="KW-0645">Protease</keyword>
<keyword id="KW-1185">Reference proteome</keyword>
<keyword id="KW-0720">Serine protease</keyword>
<keyword id="KW-0346">Stress response</keyword>
<name>LON_CYTH3</name>
<gene>
    <name evidence="1" type="primary">lon</name>
    <name type="ordered locus">CHU_2992</name>
</gene>
<accession>Q11QT1</accession>
<sequence>MLDTEPVDMIPLITPEEEAEMDKEEFPSVLPILPVRNIVLFPGVVLPITVGRQKSIRLVKKFYKGDRTIGVVAQENQKSEEPSFQDIFKVGTVAKILRMFVLPDGNTTIIIQGKRRFKIEEQVQDEPFMQAKVSMLKDIHPDMSKKEVKALLQSVKESATKILKMNPEIPQDAQIAINNIESENFLTHFLSSNINAELKDKQKLLEFDDAVERATWLLQLMDKDIQMLEIKREIHTKVHTDIDQQQRDYFLRQQIKVLQDELGDFSSEQEFERLKEKALTKKWSDKVRAHFDKEMSKLQRVNPMAPDYPVTFNYLELLVDLPWGENSTDNFDLVRAKEILDEDHFGLTKVKQRILEYLAVLKLKNNMKAPILCLYGPPGVGKTSLGKSIAKALDRKYIRMSLGGVHDESEIRGHRKTYIGAMPGKIIQGIKRSETSNPVFILDEIDKISKDFRGDPSSALLEVLDPEQNSSFMDNFLEVEYDLSKVLFIATSNALDTIQPALRDRMEIIEINGYTLEEKIQIAKKYLIPKQKEEHGLKAKDISFTDAAIVKIIEDYTRESGVRNLERKIGAVVRNIAVAIAMETAYTKKIQPAQVREILGSEDFEKDTYQQDDLAGIVTGLAWTPYGGEILTIESIISKGKGKLTLSGQLGDVMKESASAALSLLRANVDAIGIDHRVFDHFDLHVHVPAGATPKDGPSAGIALYTSLASTFTQRKIKPALAMTGEITLRGKVLPVGGIKEKILAAKRAGIKEIILSKKNKKDIEEIHPPDIADLKFHFVETADEVLAIALLKQKIKKPFNLEVPEEPKKKDK</sequence>
<organism>
    <name type="scientific">Cytophaga hutchinsonii (strain ATCC 33406 / DSM 1761 / CIP 103989 / NBRC 15051 / NCIMB 9469 / D465)</name>
    <dbReference type="NCBI Taxonomy" id="269798"/>
    <lineage>
        <taxon>Bacteria</taxon>
        <taxon>Pseudomonadati</taxon>
        <taxon>Bacteroidota</taxon>
        <taxon>Cytophagia</taxon>
        <taxon>Cytophagales</taxon>
        <taxon>Cytophagaceae</taxon>
        <taxon>Cytophaga</taxon>
    </lineage>
</organism>
<feature type="chain" id="PRO_0000396551" description="Lon protease">
    <location>
        <begin position="1"/>
        <end position="813"/>
    </location>
</feature>
<feature type="domain" description="Lon N-terminal" evidence="3">
    <location>
        <begin position="30"/>
        <end position="225"/>
    </location>
</feature>
<feature type="domain" description="Lon proteolytic" evidence="2">
    <location>
        <begin position="612"/>
        <end position="793"/>
    </location>
</feature>
<feature type="active site" evidence="1">
    <location>
        <position position="699"/>
    </location>
</feature>
<feature type="active site" evidence="1">
    <location>
        <position position="742"/>
    </location>
</feature>
<feature type="binding site" evidence="1">
    <location>
        <begin position="376"/>
        <end position="383"/>
    </location>
    <ligand>
        <name>ATP</name>
        <dbReference type="ChEBI" id="CHEBI:30616"/>
    </ligand>
</feature>
<proteinExistence type="inferred from homology"/>
<comment type="function">
    <text evidence="1">ATP-dependent serine protease that mediates the selective degradation of mutant and abnormal proteins as well as certain short-lived regulatory proteins. Required for cellular homeostasis and for survival from DNA damage and developmental changes induced by stress. Degrades polypeptides processively to yield small peptide fragments that are 5 to 10 amino acids long. Binds to DNA in a double-stranded, site-specific manner.</text>
</comment>
<comment type="catalytic activity">
    <reaction evidence="1">
        <text>Hydrolysis of proteins in presence of ATP.</text>
        <dbReference type="EC" id="3.4.21.53"/>
    </reaction>
</comment>
<comment type="subunit">
    <text evidence="1">Homohexamer. Organized in a ring with a central cavity.</text>
</comment>
<comment type="subcellular location">
    <subcellularLocation>
        <location evidence="1">Cytoplasm</location>
    </subcellularLocation>
</comment>
<comment type="induction">
    <text evidence="1">By heat shock.</text>
</comment>
<comment type="similarity">
    <text evidence="1">Belongs to the peptidase S16 family.</text>
</comment>
<reference key="1">
    <citation type="journal article" date="2007" name="Appl. Environ. Microbiol.">
        <title>Genome sequence of the cellulolytic gliding bacterium Cytophaga hutchinsonii.</title>
        <authorList>
            <person name="Xie G."/>
            <person name="Bruce D.C."/>
            <person name="Challacombe J.F."/>
            <person name="Chertkov O."/>
            <person name="Detter J.C."/>
            <person name="Gilna P."/>
            <person name="Han C.S."/>
            <person name="Lucas S."/>
            <person name="Misra M."/>
            <person name="Myers G.L."/>
            <person name="Richardson P."/>
            <person name="Tapia R."/>
            <person name="Thayer N."/>
            <person name="Thompson L.S."/>
            <person name="Brettin T.S."/>
            <person name="Henrissat B."/>
            <person name="Wilson D.B."/>
            <person name="McBride M.J."/>
        </authorList>
    </citation>
    <scope>NUCLEOTIDE SEQUENCE [LARGE SCALE GENOMIC DNA]</scope>
    <source>
        <strain>ATCC 33406 / DSM 1761 / JCM 20678 / CIP 103989 / IAM 12607 / NBRC 15051 / NCIMB 9469 / D465</strain>
    </source>
</reference>
<dbReference type="EC" id="3.4.21.53" evidence="1"/>
<dbReference type="EMBL" id="CP000383">
    <property type="protein sequence ID" value="ABG60233.1"/>
    <property type="molecule type" value="Genomic_DNA"/>
</dbReference>
<dbReference type="RefSeq" id="WP_011586343.1">
    <property type="nucleotide sequence ID" value="NC_008255.1"/>
</dbReference>
<dbReference type="SMR" id="Q11QT1"/>
<dbReference type="STRING" id="269798.CHU_2992"/>
<dbReference type="KEGG" id="chu:CHU_2992"/>
<dbReference type="eggNOG" id="COG0466">
    <property type="taxonomic scope" value="Bacteria"/>
</dbReference>
<dbReference type="HOGENOM" id="CLU_004109_4_3_10"/>
<dbReference type="OrthoDB" id="9803599at2"/>
<dbReference type="Proteomes" id="UP000001822">
    <property type="component" value="Chromosome"/>
</dbReference>
<dbReference type="GO" id="GO:0005737">
    <property type="term" value="C:cytoplasm"/>
    <property type="evidence" value="ECO:0007669"/>
    <property type="project" value="UniProtKB-SubCell"/>
</dbReference>
<dbReference type="GO" id="GO:0005524">
    <property type="term" value="F:ATP binding"/>
    <property type="evidence" value="ECO:0007669"/>
    <property type="project" value="UniProtKB-UniRule"/>
</dbReference>
<dbReference type="GO" id="GO:0016887">
    <property type="term" value="F:ATP hydrolysis activity"/>
    <property type="evidence" value="ECO:0007669"/>
    <property type="project" value="UniProtKB-UniRule"/>
</dbReference>
<dbReference type="GO" id="GO:0004176">
    <property type="term" value="F:ATP-dependent peptidase activity"/>
    <property type="evidence" value="ECO:0007669"/>
    <property type="project" value="UniProtKB-UniRule"/>
</dbReference>
<dbReference type="GO" id="GO:0043565">
    <property type="term" value="F:sequence-specific DNA binding"/>
    <property type="evidence" value="ECO:0007669"/>
    <property type="project" value="UniProtKB-UniRule"/>
</dbReference>
<dbReference type="GO" id="GO:0004252">
    <property type="term" value="F:serine-type endopeptidase activity"/>
    <property type="evidence" value="ECO:0007669"/>
    <property type="project" value="UniProtKB-UniRule"/>
</dbReference>
<dbReference type="GO" id="GO:0034605">
    <property type="term" value="P:cellular response to heat"/>
    <property type="evidence" value="ECO:0007669"/>
    <property type="project" value="UniProtKB-UniRule"/>
</dbReference>
<dbReference type="GO" id="GO:0006515">
    <property type="term" value="P:protein quality control for misfolded or incompletely synthesized proteins"/>
    <property type="evidence" value="ECO:0007669"/>
    <property type="project" value="UniProtKB-UniRule"/>
</dbReference>
<dbReference type="CDD" id="cd19500">
    <property type="entry name" value="RecA-like_Lon"/>
    <property type="match status" value="1"/>
</dbReference>
<dbReference type="FunFam" id="3.40.50.300:FF:000021">
    <property type="entry name" value="Lon protease homolog"/>
    <property type="match status" value="1"/>
</dbReference>
<dbReference type="Gene3D" id="1.10.8.60">
    <property type="match status" value="1"/>
</dbReference>
<dbReference type="Gene3D" id="1.20.5.5270">
    <property type="match status" value="1"/>
</dbReference>
<dbReference type="Gene3D" id="1.20.58.1480">
    <property type="match status" value="1"/>
</dbReference>
<dbReference type="Gene3D" id="3.30.230.10">
    <property type="match status" value="1"/>
</dbReference>
<dbReference type="Gene3D" id="2.30.130.40">
    <property type="entry name" value="LON domain-like"/>
    <property type="match status" value="1"/>
</dbReference>
<dbReference type="Gene3D" id="3.40.50.300">
    <property type="entry name" value="P-loop containing nucleotide triphosphate hydrolases"/>
    <property type="match status" value="1"/>
</dbReference>
<dbReference type="HAMAP" id="MF_01973">
    <property type="entry name" value="lon_bact"/>
    <property type="match status" value="1"/>
</dbReference>
<dbReference type="InterPro" id="IPR003593">
    <property type="entry name" value="AAA+_ATPase"/>
</dbReference>
<dbReference type="InterPro" id="IPR003959">
    <property type="entry name" value="ATPase_AAA_core"/>
</dbReference>
<dbReference type="InterPro" id="IPR027543">
    <property type="entry name" value="Lon_bac"/>
</dbReference>
<dbReference type="InterPro" id="IPR004815">
    <property type="entry name" value="Lon_bac/euk-typ"/>
</dbReference>
<dbReference type="InterPro" id="IPR054594">
    <property type="entry name" value="Lon_lid"/>
</dbReference>
<dbReference type="InterPro" id="IPR008269">
    <property type="entry name" value="Lon_proteolytic"/>
</dbReference>
<dbReference type="InterPro" id="IPR027065">
    <property type="entry name" value="Lon_Prtase"/>
</dbReference>
<dbReference type="InterPro" id="IPR003111">
    <property type="entry name" value="Lon_prtase_N"/>
</dbReference>
<dbReference type="InterPro" id="IPR046336">
    <property type="entry name" value="Lon_prtase_N_sf"/>
</dbReference>
<dbReference type="InterPro" id="IPR027417">
    <property type="entry name" value="P-loop_NTPase"/>
</dbReference>
<dbReference type="InterPro" id="IPR008268">
    <property type="entry name" value="Peptidase_S16_AS"/>
</dbReference>
<dbReference type="InterPro" id="IPR015947">
    <property type="entry name" value="PUA-like_sf"/>
</dbReference>
<dbReference type="InterPro" id="IPR020568">
    <property type="entry name" value="Ribosomal_Su5_D2-typ_SF"/>
</dbReference>
<dbReference type="InterPro" id="IPR014721">
    <property type="entry name" value="Ribsml_uS5_D2-typ_fold_subgr"/>
</dbReference>
<dbReference type="NCBIfam" id="TIGR00763">
    <property type="entry name" value="lon"/>
    <property type="match status" value="1"/>
</dbReference>
<dbReference type="PANTHER" id="PTHR10046">
    <property type="entry name" value="ATP DEPENDENT LON PROTEASE FAMILY MEMBER"/>
    <property type="match status" value="1"/>
</dbReference>
<dbReference type="Pfam" id="PF00004">
    <property type="entry name" value="AAA"/>
    <property type="match status" value="1"/>
</dbReference>
<dbReference type="Pfam" id="PF05362">
    <property type="entry name" value="Lon_C"/>
    <property type="match status" value="1"/>
</dbReference>
<dbReference type="Pfam" id="PF22667">
    <property type="entry name" value="Lon_lid"/>
    <property type="match status" value="1"/>
</dbReference>
<dbReference type="Pfam" id="PF02190">
    <property type="entry name" value="LON_substr_bdg"/>
    <property type="match status" value="1"/>
</dbReference>
<dbReference type="PIRSF" id="PIRSF001174">
    <property type="entry name" value="Lon_proteas"/>
    <property type="match status" value="1"/>
</dbReference>
<dbReference type="PRINTS" id="PR00830">
    <property type="entry name" value="ENDOLAPTASE"/>
</dbReference>
<dbReference type="SMART" id="SM00382">
    <property type="entry name" value="AAA"/>
    <property type="match status" value="1"/>
</dbReference>
<dbReference type="SMART" id="SM00464">
    <property type="entry name" value="LON"/>
    <property type="match status" value="1"/>
</dbReference>
<dbReference type="SUPFAM" id="SSF52540">
    <property type="entry name" value="P-loop containing nucleoside triphosphate hydrolases"/>
    <property type="match status" value="1"/>
</dbReference>
<dbReference type="SUPFAM" id="SSF88697">
    <property type="entry name" value="PUA domain-like"/>
    <property type="match status" value="1"/>
</dbReference>
<dbReference type="SUPFAM" id="SSF54211">
    <property type="entry name" value="Ribosomal protein S5 domain 2-like"/>
    <property type="match status" value="1"/>
</dbReference>
<dbReference type="PROSITE" id="PS51787">
    <property type="entry name" value="LON_N"/>
    <property type="match status" value="1"/>
</dbReference>
<dbReference type="PROSITE" id="PS51786">
    <property type="entry name" value="LON_PROTEOLYTIC"/>
    <property type="match status" value="1"/>
</dbReference>
<dbReference type="PROSITE" id="PS01046">
    <property type="entry name" value="LON_SER"/>
    <property type="match status" value="1"/>
</dbReference>
<evidence type="ECO:0000255" key="1">
    <source>
        <dbReference type="HAMAP-Rule" id="MF_01973"/>
    </source>
</evidence>
<evidence type="ECO:0000255" key="2">
    <source>
        <dbReference type="PROSITE-ProRule" id="PRU01122"/>
    </source>
</evidence>
<evidence type="ECO:0000255" key="3">
    <source>
        <dbReference type="PROSITE-ProRule" id="PRU01123"/>
    </source>
</evidence>